<reference key="1">
    <citation type="journal article" date="2001" name="Proc. Natl. Acad. Sci. U.S.A.">
        <title>Complete genome sequence of an M1 strain of Streptococcus pyogenes.</title>
        <authorList>
            <person name="Ferretti J.J."/>
            <person name="McShan W.M."/>
            <person name="Ajdic D.J."/>
            <person name="Savic D.J."/>
            <person name="Savic G."/>
            <person name="Lyon K."/>
            <person name="Primeaux C."/>
            <person name="Sezate S."/>
            <person name="Suvorov A.N."/>
            <person name="Kenton S."/>
            <person name="Lai H.S."/>
            <person name="Lin S.P."/>
            <person name="Qian Y."/>
            <person name="Jia H.G."/>
            <person name="Najar F.Z."/>
            <person name="Ren Q."/>
            <person name="Zhu H."/>
            <person name="Song L."/>
            <person name="White J."/>
            <person name="Yuan X."/>
            <person name="Clifton S.W."/>
            <person name="Roe B.A."/>
            <person name="McLaughlin R.E."/>
        </authorList>
    </citation>
    <scope>NUCLEOTIDE SEQUENCE [LARGE SCALE GENOMIC DNA]</scope>
    <source>
        <strain>ATCC 700294 / SF370 / Serotype M1</strain>
    </source>
</reference>
<reference key="2">
    <citation type="journal article" date="2005" name="J. Infect. Dis.">
        <title>Evolutionary origin and emergence of a highly successful clone of serotype M1 group A Streptococcus involved multiple horizontal gene transfer events.</title>
        <authorList>
            <person name="Sumby P."/>
            <person name="Porcella S.F."/>
            <person name="Madrigal A.G."/>
            <person name="Barbian K.D."/>
            <person name="Virtaneva K."/>
            <person name="Ricklefs S.M."/>
            <person name="Sturdevant D.E."/>
            <person name="Graham M.R."/>
            <person name="Vuopio-Varkila J."/>
            <person name="Hoe N.P."/>
            <person name="Musser J.M."/>
        </authorList>
    </citation>
    <scope>NUCLEOTIDE SEQUENCE [LARGE SCALE GENOMIC DNA]</scope>
    <source>
        <strain>ATCC BAA-947 / MGAS5005 / Serotype M1</strain>
    </source>
</reference>
<gene>
    <name evidence="1" type="primary">rpmE2</name>
    <name type="synonym">rl31</name>
    <name type="synonym">rpmE</name>
    <name type="ordered locus">SPy_0717</name>
    <name type="ordered locus">M5005_Spy0546</name>
</gene>
<sequence length="86" mass="9854">MRKDIHPDYRPVVFLDTTTGYQFLSGSTKASKETVEFEGETYPLIRVEISSDSHPFYTGRQKFTQADGRVDRFNKKYGLKDANAAK</sequence>
<name>RL31B_STRP1</name>
<proteinExistence type="inferred from homology"/>
<organism>
    <name type="scientific">Streptococcus pyogenes serotype M1</name>
    <dbReference type="NCBI Taxonomy" id="301447"/>
    <lineage>
        <taxon>Bacteria</taxon>
        <taxon>Bacillati</taxon>
        <taxon>Bacillota</taxon>
        <taxon>Bacilli</taxon>
        <taxon>Lactobacillales</taxon>
        <taxon>Streptococcaceae</taxon>
        <taxon>Streptococcus</taxon>
    </lineage>
</organism>
<comment type="subunit">
    <text evidence="1">Part of the 50S ribosomal subunit.</text>
</comment>
<comment type="similarity">
    <text evidence="1">Belongs to the bacterial ribosomal protein bL31 family. Type B subfamily.</text>
</comment>
<accession>P66202</accession>
<accession>Q48ZQ4</accession>
<accession>Q9A0L6</accession>
<protein>
    <recommendedName>
        <fullName evidence="1">Large ribosomal subunit protein bL31B</fullName>
    </recommendedName>
    <alternativeName>
        <fullName evidence="2">50S ribosomal protein L31 type B</fullName>
    </alternativeName>
</protein>
<feature type="chain" id="PRO_0000173272" description="Large ribosomal subunit protein bL31B">
    <location>
        <begin position="1"/>
        <end position="86"/>
    </location>
</feature>
<dbReference type="EMBL" id="AE004092">
    <property type="protein sequence ID" value="AAK33670.1"/>
    <property type="molecule type" value="Genomic_DNA"/>
</dbReference>
<dbReference type="EMBL" id="CP000017">
    <property type="protein sequence ID" value="AAZ51164.1"/>
    <property type="molecule type" value="Genomic_DNA"/>
</dbReference>
<dbReference type="RefSeq" id="NP_268949.1">
    <property type="nucleotide sequence ID" value="NC_002737.2"/>
</dbReference>
<dbReference type="SMR" id="P66202"/>
<dbReference type="PaxDb" id="1314-HKU360_00556"/>
<dbReference type="KEGG" id="spy:SPy_0717"/>
<dbReference type="KEGG" id="spz:M5005_Spy0546"/>
<dbReference type="PATRIC" id="fig|160490.10.peg.611"/>
<dbReference type="HOGENOM" id="CLU_114306_2_1_9"/>
<dbReference type="OMA" id="YRLVAFK"/>
<dbReference type="PRO" id="PR:P66202"/>
<dbReference type="Proteomes" id="UP000000750">
    <property type="component" value="Chromosome"/>
</dbReference>
<dbReference type="GO" id="GO:1990904">
    <property type="term" value="C:ribonucleoprotein complex"/>
    <property type="evidence" value="ECO:0007669"/>
    <property type="project" value="UniProtKB-KW"/>
</dbReference>
<dbReference type="GO" id="GO:0005840">
    <property type="term" value="C:ribosome"/>
    <property type="evidence" value="ECO:0007669"/>
    <property type="project" value="UniProtKB-KW"/>
</dbReference>
<dbReference type="GO" id="GO:0003735">
    <property type="term" value="F:structural constituent of ribosome"/>
    <property type="evidence" value="ECO:0007669"/>
    <property type="project" value="InterPro"/>
</dbReference>
<dbReference type="GO" id="GO:0006412">
    <property type="term" value="P:translation"/>
    <property type="evidence" value="ECO:0007669"/>
    <property type="project" value="UniProtKB-UniRule"/>
</dbReference>
<dbReference type="Gene3D" id="4.10.830.30">
    <property type="entry name" value="Ribosomal protein L31"/>
    <property type="match status" value="1"/>
</dbReference>
<dbReference type="HAMAP" id="MF_00502">
    <property type="entry name" value="Ribosomal_bL31_2"/>
    <property type="match status" value="1"/>
</dbReference>
<dbReference type="InterPro" id="IPR034704">
    <property type="entry name" value="Ribosomal_bL28/bL31-like_sf"/>
</dbReference>
<dbReference type="InterPro" id="IPR002150">
    <property type="entry name" value="Ribosomal_bL31"/>
</dbReference>
<dbReference type="InterPro" id="IPR027493">
    <property type="entry name" value="Ribosomal_bL31_B"/>
</dbReference>
<dbReference type="InterPro" id="IPR042105">
    <property type="entry name" value="Ribosomal_bL31_sf"/>
</dbReference>
<dbReference type="NCBIfam" id="TIGR00105">
    <property type="entry name" value="L31"/>
    <property type="match status" value="1"/>
</dbReference>
<dbReference type="NCBIfam" id="NF002462">
    <property type="entry name" value="PRK01678.1"/>
    <property type="match status" value="1"/>
</dbReference>
<dbReference type="PANTHER" id="PTHR33280">
    <property type="entry name" value="50S RIBOSOMAL PROTEIN L31, CHLOROPLASTIC"/>
    <property type="match status" value="1"/>
</dbReference>
<dbReference type="PANTHER" id="PTHR33280:SF1">
    <property type="entry name" value="LARGE RIBOSOMAL SUBUNIT PROTEIN BL31C"/>
    <property type="match status" value="1"/>
</dbReference>
<dbReference type="Pfam" id="PF01197">
    <property type="entry name" value="Ribosomal_L31"/>
    <property type="match status" value="1"/>
</dbReference>
<dbReference type="PRINTS" id="PR01249">
    <property type="entry name" value="RIBOSOMALL31"/>
</dbReference>
<dbReference type="SUPFAM" id="SSF143800">
    <property type="entry name" value="L28p-like"/>
    <property type="match status" value="1"/>
</dbReference>
<dbReference type="PROSITE" id="PS01143">
    <property type="entry name" value="RIBOSOMAL_L31"/>
    <property type="match status" value="1"/>
</dbReference>
<keyword id="KW-1185">Reference proteome</keyword>
<keyword id="KW-0687">Ribonucleoprotein</keyword>
<keyword id="KW-0689">Ribosomal protein</keyword>
<evidence type="ECO:0000255" key="1">
    <source>
        <dbReference type="HAMAP-Rule" id="MF_00502"/>
    </source>
</evidence>
<evidence type="ECO:0000305" key="2"/>